<reference key="1">
    <citation type="journal article" date="2006" name="Arch. Virol.">
        <title>Genome characterization of a flexuous rod-shaped mycovirus, Botrytis virus X, reveals high amino acid identity to genes from plant 'potex-like' viruses.</title>
        <authorList>
            <person name="Howitt R.L."/>
            <person name="Beever R.E."/>
            <person name="Pearson M.N."/>
            <person name="Forster R.L."/>
        </authorList>
    </citation>
    <scope>NUCLEOTIDE SEQUENCE [GENOMIC RNA]</scope>
</reference>
<gene>
    <name type="primary">ORF2</name>
</gene>
<proteinExistence type="predicted"/>
<organismHost>
    <name type="scientific">Botryotinia fuckeliana</name>
    <name type="common">Noble rot fungus</name>
    <name type="synonym">Botrytis cinerea</name>
    <dbReference type="NCBI Taxonomy" id="40559"/>
</organismHost>
<organism>
    <name type="scientific">Botrytis virus X (isolate Botrytis cinerea/New Zealand/Howitt/2006)</name>
    <name type="common">BOTV-X</name>
    <dbReference type="NCBI Taxonomy" id="686947"/>
    <lineage>
        <taxon>Viruses</taxon>
        <taxon>Riboviria</taxon>
        <taxon>Orthornavirae</taxon>
        <taxon>Kitrinoviricota</taxon>
        <taxon>Alsuviricetes</taxon>
        <taxon>Tymovirales</taxon>
        <taxon>Alphaflexiviridae</taxon>
        <taxon>Botrexvirus</taxon>
        <taxon>Botrytis virus X</taxon>
    </lineage>
</organism>
<evidence type="ECO:0000256" key="1">
    <source>
        <dbReference type="SAM" id="MobiDB-lite"/>
    </source>
</evidence>
<feature type="chain" id="PRO_0000401069" description="Uncharacterized ORF2 protein">
    <location>
        <begin position="1"/>
        <end position="278"/>
    </location>
</feature>
<feature type="region of interest" description="Disordered" evidence="1">
    <location>
        <begin position="127"/>
        <end position="174"/>
    </location>
</feature>
<feature type="compositionally biased region" description="Pro residues" evidence="1">
    <location>
        <begin position="127"/>
        <end position="151"/>
    </location>
</feature>
<feature type="compositionally biased region" description="Low complexity" evidence="1">
    <location>
        <begin position="164"/>
        <end position="174"/>
    </location>
</feature>
<accession>Q6YNQ6</accession>
<dbReference type="EMBL" id="AY055762">
    <property type="protein sequence ID" value="AAL17723.1"/>
    <property type="molecule type" value="Genomic_RNA"/>
</dbReference>
<dbReference type="RefSeq" id="NP_932308.1">
    <property type="nucleotide sequence ID" value="NC_005132.1"/>
</dbReference>
<dbReference type="KEGG" id="vg:2943232"/>
<dbReference type="Proteomes" id="UP000001664">
    <property type="component" value="Segment"/>
</dbReference>
<protein>
    <recommendedName>
        <fullName>Uncharacterized ORF2 protein</fullName>
    </recommendedName>
</protein>
<name>ORF2_BOTVX</name>
<sequence>MSVTPDPTVGQALHPFSVPPTPAELDHIAAFYNVHPTPPLIGFSLIGSVNIRPGGTSQRLTGIFDATPNSLPDAVASLSAHNFHHLLDWHHSIDPAHIAAAPHPHTPAIKAALQRLTLIPNVIIYAPPTPSPPPPPAPTQPTRPTPGPAFFPQPFKVELHHPTPKTSSLPAPSLPTSLPPIITNQYLRLQISTPTGARQTYLRALIPKSPDLTDFILRIDLTEYHAHLIFTAELTRDHSITLARGPYVWPTFLPPSINNLIKLTHAAAEPSLQLTEIS</sequence>
<keyword id="KW-1185">Reference proteome</keyword>